<accession>A1V4V8</accession>
<name>G6PI_BURMS</name>
<proteinExistence type="inferred from homology"/>
<evidence type="ECO:0000255" key="1">
    <source>
        <dbReference type="HAMAP-Rule" id="MF_00473"/>
    </source>
</evidence>
<protein>
    <recommendedName>
        <fullName evidence="1">Glucose-6-phosphate isomerase</fullName>
        <shortName evidence="1">GPI</shortName>
        <ecNumber evidence="1">5.3.1.9</ecNumber>
    </recommendedName>
    <alternativeName>
        <fullName evidence="1">Phosphoglucose isomerase</fullName>
        <shortName evidence="1">PGI</shortName>
    </alternativeName>
    <alternativeName>
        <fullName evidence="1">Phosphohexose isomerase</fullName>
        <shortName evidence="1">PHI</shortName>
    </alternativeName>
</protein>
<keyword id="KW-0963">Cytoplasm</keyword>
<keyword id="KW-0312">Gluconeogenesis</keyword>
<keyword id="KW-0324">Glycolysis</keyword>
<keyword id="KW-0413">Isomerase</keyword>
<sequence length="540" mass="58843">MTLNSLPVWPALQAHYEEIRDAHLRDWFAPANDRAPTRAERFTFEGGGLAADFSKNRLTDATLALLVRLAREAGVEARRDAMFAGETVNPTEGRAALHTALRANAPDAPFQAQVAAERAKMARFADAVRSGAWTGYTGKRIRHVVNIGIGGSDLGPKMVVHALHHVATPDIATHFVSNVDGADLARVLERIDPEETLAIIVSKTFTTLETMTNARSLRDWFVANGCPEGALAKHFVGVSANPAEVVKFGIAEANVFEMWDWVGGRYSLWSAVGLSIMIAIGPERFDELLAGARDMDEHFRTAPLERNLPVLQGLVGIWYRNFFGAQSYLVAPYSEALHYLPSYLQQLEMESNGKSARIDGAFVDYPTSAVTWGEPGTNGQHAFFQMLHQGPTLVPIDFIAVLTPEHPLASHHPKLLANCFAQSEALMLGRTLDEARKIAGPAKPELAPHLTFPGNRPTTTLLVDALTPRTLGALIALYEHKVLVQAAVWNINPFDQWGVELGKILGKVVEADLTAAQVDPAKHDSSTSALIARARKALGE</sequence>
<comment type="function">
    <text evidence="1">Catalyzes the reversible isomerization of glucose-6-phosphate to fructose-6-phosphate.</text>
</comment>
<comment type="catalytic activity">
    <reaction evidence="1">
        <text>alpha-D-glucose 6-phosphate = beta-D-fructose 6-phosphate</text>
        <dbReference type="Rhea" id="RHEA:11816"/>
        <dbReference type="ChEBI" id="CHEBI:57634"/>
        <dbReference type="ChEBI" id="CHEBI:58225"/>
        <dbReference type="EC" id="5.3.1.9"/>
    </reaction>
</comment>
<comment type="pathway">
    <text evidence="1">Carbohydrate biosynthesis; gluconeogenesis.</text>
</comment>
<comment type="pathway">
    <text evidence="1">Carbohydrate degradation; glycolysis; D-glyceraldehyde 3-phosphate and glycerone phosphate from D-glucose: step 2/4.</text>
</comment>
<comment type="subcellular location">
    <subcellularLocation>
        <location evidence="1">Cytoplasm</location>
    </subcellularLocation>
</comment>
<comment type="similarity">
    <text evidence="1">Belongs to the GPI family.</text>
</comment>
<gene>
    <name evidence="1" type="primary">pgi</name>
    <name type="ordered locus">BMASAVP1_A1942</name>
</gene>
<organism>
    <name type="scientific">Burkholderia mallei (strain SAVP1)</name>
    <dbReference type="NCBI Taxonomy" id="320388"/>
    <lineage>
        <taxon>Bacteria</taxon>
        <taxon>Pseudomonadati</taxon>
        <taxon>Pseudomonadota</taxon>
        <taxon>Betaproteobacteria</taxon>
        <taxon>Burkholderiales</taxon>
        <taxon>Burkholderiaceae</taxon>
        <taxon>Burkholderia</taxon>
        <taxon>pseudomallei group</taxon>
    </lineage>
</organism>
<reference key="1">
    <citation type="journal article" date="2010" name="Genome Biol. Evol.">
        <title>Continuing evolution of Burkholderia mallei through genome reduction and large-scale rearrangements.</title>
        <authorList>
            <person name="Losada L."/>
            <person name="Ronning C.M."/>
            <person name="DeShazer D."/>
            <person name="Woods D."/>
            <person name="Fedorova N."/>
            <person name="Kim H.S."/>
            <person name="Shabalina S.A."/>
            <person name="Pearson T.R."/>
            <person name="Brinkac L."/>
            <person name="Tan P."/>
            <person name="Nandi T."/>
            <person name="Crabtree J."/>
            <person name="Badger J."/>
            <person name="Beckstrom-Sternberg S."/>
            <person name="Saqib M."/>
            <person name="Schutzer S.E."/>
            <person name="Keim P."/>
            <person name="Nierman W.C."/>
        </authorList>
    </citation>
    <scope>NUCLEOTIDE SEQUENCE [LARGE SCALE GENOMIC DNA]</scope>
    <source>
        <strain>SAVP1</strain>
    </source>
</reference>
<dbReference type="EC" id="5.3.1.9" evidence="1"/>
<dbReference type="EMBL" id="CP000526">
    <property type="protein sequence ID" value="ABM51816.1"/>
    <property type="molecule type" value="Genomic_DNA"/>
</dbReference>
<dbReference type="RefSeq" id="WP_004191382.1">
    <property type="nucleotide sequence ID" value="NC_008785.1"/>
</dbReference>
<dbReference type="SMR" id="A1V4V8"/>
<dbReference type="GeneID" id="93060581"/>
<dbReference type="KEGG" id="bmv:BMASAVP1_A1942"/>
<dbReference type="HOGENOM" id="CLU_017947_3_1_4"/>
<dbReference type="UniPathway" id="UPA00109">
    <property type="reaction ID" value="UER00181"/>
</dbReference>
<dbReference type="UniPathway" id="UPA00138"/>
<dbReference type="GO" id="GO:0005829">
    <property type="term" value="C:cytosol"/>
    <property type="evidence" value="ECO:0007669"/>
    <property type="project" value="TreeGrafter"/>
</dbReference>
<dbReference type="GO" id="GO:0097367">
    <property type="term" value="F:carbohydrate derivative binding"/>
    <property type="evidence" value="ECO:0007669"/>
    <property type="project" value="InterPro"/>
</dbReference>
<dbReference type="GO" id="GO:0004347">
    <property type="term" value="F:glucose-6-phosphate isomerase activity"/>
    <property type="evidence" value="ECO:0007669"/>
    <property type="project" value="UniProtKB-UniRule"/>
</dbReference>
<dbReference type="GO" id="GO:0048029">
    <property type="term" value="F:monosaccharide binding"/>
    <property type="evidence" value="ECO:0007669"/>
    <property type="project" value="TreeGrafter"/>
</dbReference>
<dbReference type="GO" id="GO:0006094">
    <property type="term" value="P:gluconeogenesis"/>
    <property type="evidence" value="ECO:0007669"/>
    <property type="project" value="UniProtKB-UniRule"/>
</dbReference>
<dbReference type="GO" id="GO:0051156">
    <property type="term" value="P:glucose 6-phosphate metabolic process"/>
    <property type="evidence" value="ECO:0007669"/>
    <property type="project" value="TreeGrafter"/>
</dbReference>
<dbReference type="GO" id="GO:0006096">
    <property type="term" value="P:glycolytic process"/>
    <property type="evidence" value="ECO:0007669"/>
    <property type="project" value="UniProtKB-UniRule"/>
</dbReference>
<dbReference type="CDD" id="cd05015">
    <property type="entry name" value="SIS_PGI_1"/>
    <property type="match status" value="1"/>
</dbReference>
<dbReference type="CDD" id="cd05016">
    <property type="entry name" value="SIS_PGI_2"/>
    <property type="match status" value="1"/>
</dbReference>
<dbReference type="Gene3D" id="1.10.1390.10">
    <property type="match status" value="1"/>
</dbReference>
<dbReference type="Gene3D" id="3.40.50.10490">
    <property type="entry name" value="Glucose-6-phosphate isomerase like protein, domain 1"/>
    <property type="match status" value="2"/>
</dbReference>
<dbReference type="HAMAP" id="MF_00473">
    <property type="entry name" value="G6P_isomerase"/>
    <property type="match status" value="1"/>
</dbReference>
<dbReference type="InterPro" id="IPR001672">
    <property type="entry name" value="G6P_Isomerase"/>
</dbReference>
<dbReference type="InterPro" id="IPR023096">
    <property type="entry name" value="G6P_Isomerase_C"/>
</dbReference>
<dbReference type="InterPro" id="IPR018189">
    <property type="entry name" value="Phosphoglucose_isomerase_CS"/>
</dbReference>
<dbReference type="InterPro" id="IPR046348">
    <property type="entry name" value="SIS_dom_sf"/>
</dbReference>
<dbReference type="InterPro" id="IPR035476">
    <property type="entry name" value="SIS_PGI_1"/>
</dbReference>
<dbReference type="InterPro" id="IPR035482">
    <property type="entry name" value="SIS_PGI_2"/>
</dbReference>
<dbReference type="NCBIfam" id="NF001211">
    <property type="entry name" value="PRK00179.1"/>
    <property type="match status" value="1"/>
</dbReference>
<dbReference type="PANTHER" id="PTHR11469">
    <property type="entry name" value="GLUCOSE-6-PHOSPHATE ISOMERASE"/>
    <property type="match status" value="1"/>
</dbReference>
<dbReference type="PANTHER" id="PTHR11469:SF1">
    <property type="entry name" value="GLUCOSE-6-PHOSPHATE ISOMERASE"/>
    <property type="match status" value="1"/>
</dbReference>
<dbReference type="Pfam" id="PF00342">
    <property type="entry name" value="PGI"/>
    <property type="match status" value="1"/>
</dbReference>
<dbReference type="PRINTS" id="PR00662">
    <property type="entry name" value="G6PISOMERASE"/>
</dbReference>
<dbReference type="SUPFAM" id="SSF53697">
    <property type="entry name" value="SIS domain"/>
    <property type="match status" value="1"/>
</dbReference>
<dbReference type="PROSITE" id="PS00765">
    <property type="entry name" value="P_GLUCOSE_ISOMERASE_1"/>
    <property type="match status" value="1"/>
</dbReference>
<dbReference type="PROSITE" id="PS00174">
    <property type="entry name" value="P_GLUCOSE_ISOMERASE_2"/>
    <property type="match status" value="1"/>
</dbReference>
<dbReference type="PROSITE" id="PS51463">
    <property type="entry name" value="P_GLUCOSE_ISOMERASE_3"/>
    <property type="match status" value="1"/>
</dbReference>
<feature type="chain" id="PRO_1000013948" description="Glucose-6-phosphate isomerase">
    <location>
        <begin position="1"/>
        <end position="540"/>
    </location>
</feature>
<feature type="active site" description="Proton donor" evidence="1">
    <location>
        <position position="350"/>
    </location>
</feature>
<feature type="active site" evidence="1">
    <location>
        <position position="381"/>
    </location>
</feature>
<feature type="active site" evidence="1">
    <location>
        <position position="503"/>
    </location>
</feature>